<gene>
    <name type="primary">RPS12</name>
</gene>
<evidence type="ECO:0000256" key="1">
    <source>
        <dbReference type="SAM" id="MobiDB-lite"/>
    </source>
</evidence>
<evidence type="ECO:0000305" key="2"/>
<accession>P15755</accession>
<comment type="function">
    <text>Protein S12 is involved in the translation initiation step.</text>
</comment>
<comment type="subcellular location">
    <subcellularLocation>
        <location>Mitochondrion</location>
    </subcellularLocation>
</comment>
<comment type="similarity">
    <text evidence="2">Belongs to the universal ribosomal protein uS12 family.</text>
</comment>
<organism>
    <name type="scientific">Paramecium tetraurelia</name>
    <dbReference type="NCBI Taxonomy" id="5888"/>
    <lineage>
        <taxon>Eukaryota</taxon>
        <taxon>Sar</taxon>
        <taxon>Alveolata</taxon>
        <taxon>Ciliophora</taxon>
        <taxon>Intramacronucleata</taxon>
        <taxon>Oligohymenophorea</taxon>
        <taxon>Peniculida</taxon>
        <taxon>Parameciidae</taxon>
        <taxon>Paramecium</taxon>
    </lineage>
</organism>
<dbReference type="EMBL" id="X15917">
    <property type="protein sequence ID" value="CAA34044.1"/>
    <property type="molecule type" value="Genomic_DNA"/>
</dbReference>
<dbReference type="EMBL" id="M26930">
    <property type="protein sequence ID" value="AAA79256.1"/>
    <property type="molecule type" value="Genomic_DNA"/>
</dbReference>
<dbReference type="PIR" id="JS0234">
    <property type="entry name" value="R3PP12"/>
</dbReference>
<dbReference type="SMR" id="P15755"/>
<dbReference type="GO" id="GO:0005739">
    <property type="term" value="C:mitochondrion"/>
    <property type="evidence" value="ECO:0007669"/>
    <property type="project" value="UniProtKB-SubCell"/>
</dbReference>
<dbReference type="GO" id="GO:0015935">
    <property type="term" value="C:small ribosomal subunit"/>
    <property type="evidence" value="ECO:0007669"/>
    <property type="project" value="InterPro"/>
</dbReference>
<dbReference type="GO" id="GO:0003735">
    <property type="term" value="F:structural constituent of ribosome"/>
    <property type="evidence" value="ECO:0007669"/>
    <property type="project" value="InterPro"/>
</dbReference>
<dbReference type="GO" id="GO:0006412">
    <property type="term" value="P:translation"/>
    <property type="evidence" value="ECO:0007669"/>
    <property type="project" value="InterPro"/>
</dbReference>
<dbReference type="CDD" id="cd03368">
    <property type="entry name" value="Ribosomal_S12"/>
    <property type="match status" value="1"/>
</dbReference>
<dbReference type="Gene3D" id="2.40.50.140">
    <property type="entry name" value="Nucleic acid-binding proteins"/>
    <property type="match status" value="1"/>
</dbReference>
<dbReference type="InterPro" id="IPR012340">
    <property type="entry name" value="NA-bd_OB-fold"/>
</dbReference>
<dbReference type="InterPro" id="IPR006032">
    <property type="entry name" value="Ribosomal_uS12"/>
</dbReference>
<dbReference type="InterPro" id="IPR005679">
    <property type="entry name" value="Ribosomal_uS12_bac"/>
</dbReference>
<dbReference type="NCBIfam" id="TIGR00981">
    <property type="entry name" value="rpsL_bact"/>
    <property type="match status" value="1"/>
</dbReference>
<dbReference type="PANTHER" id="PTHR11652">
    <property type="entry name" value="30S RIBOSOMAL PROTEIN S12 FAMILY MEMBER"/>
    <property type="match status" value="1"/>
</dbReference>
<dbReference type="Pfam" id="PF00164">
    <property type="entry name" value="Ribosom_S12_S23"/>
    <property type="match status" value="1"/>
</dbReference>
<dbReference type="PIRSF" id="PIRSF002133">
    <property type="entry name" value="Ribosomal_S12/S23"/>
    <property type="match status" value="1"/>
</dbReference>
<dbReference type="PRINTS" id="PR01034">
    <property type="entry name" value="RIBOSOMALS12"/>
</dbReference>
<dbReference type="SUPFAM" id="SSF50249">
    <property type="entry name" value="Nucleic acid-binding proteins"/>
    <property type="match status" value="1"/>
</dbReference>
<dbReference type="PROSITE" id="PS00055">
    <property type="entry name" value="RIBOSOMAL_S12"/>
    <property type="match status" value="1"/>
</dbReference>
<sequence length="139" mass="15805">MLSTLYQNDLKKKRNRRRNRSAALVCCPQKEGSVLKPRIVTPKKPNSARRPVAKAKLTNKKFVVAHIPGTGHNLRKHSTILVRGGGCRDLPGVRHTCIRGVSDFLGVRDKTKRRSIYGIKRPPEMAKRVRRKFRAIFGQ</sequence>
<feature type="chain" id="PRO_0000146453" description="Small ribosomal subunit protein uS12m">
    <location>
        <begin position="1"/>
        <end position="139"/>
    </location>
</feature>
<feature type="region of interest" description="Disordered" evidence="1">
    <location>
        <begin position="1"/>
        <end position="21"/>
    </location>
</feature>
<feature type="compositionally biased region" description="Basic residues" evidence="1">
    <location>
        <begin position="11"/>
        <end position="20"/>
    </location>
</feature>
<name>RT12_PARTE</name>
<protein>
    <recommendedName>
        <fullName evidence="2">Small ribosomal subunit protein uS12m</fullName>
    </recommendedName>
    <alternativeName>
        <fullName>Ribosomal protein S12, mitochondrial</fullName>
    </alternativeName>
</protein>
<geneLocation type="mitochondrion"/>
<keyword id="KW-0496">Mitochondrion</keyword>
<keyword id="KW-0687">Ribonucleoprotein</keyword>
<keyword id="KW-0689">Ribosomal protein</keyword>
<proteinExistence type="inferred from homology"/>
<reference key="1">
    <citation type="journal article" date="1990" name="Nucleic Acids Res.">
        <title>Nucleotide sequence of the mitochondrial genome of Paramecium.</title>
        <authorList>
            <person name="Pritchard A.E."/>
            <person name="Seilhamer J.J."/>
            <person name="Mahalingam R."/>
            <person name="Sable C.L."/>
            <person name="Venuti S.E."/>
            <person name="Cummings D.J."/>
        </authorList>
    </citation>
    <scope>NUCLEOTIDE SEQUENCE [GENOMIC DNA]</scope>
    <source>
        <strain>Stock 51</strain>
    </source>
</reference>
<reference key="2">
    <citation type="journal article" date="1989" name="Gene">
        <title>An unusual region of Paramecium mitochondrial DNA containing chloroplast-like genes.</title>
        <authorList>
            <person name="Pritchard A.E."/>
            <person name="Venuti S.E."/>
            <person name="Ghalambor M.A."/>
            <person name="Sable C.L."/>
            <person name="Cummings D.J."/>
        </authorList>
    </citation>
    <scope>NUCLEOTIDE SEQUENCE [GENOMIC DNA]</scope>
    <source>
        <strain>Stock 51</strain>
    </source>
</reference>